<proteinExistence type="inferred from homology"/>
<comment type="function">
    <text evidence="1">Catalyzes the transfer of a formyl group from 10-formyltetrahydrofolate to 5-phospho-ribosyl-glycinamide (GAR), producing 5-phospho-ribosyl-N-formylglycinamide (FGAR) and tetrahydrofolate.</text>
</comment>
<comment type="catalytic activity">
    <reaction evidence="1">
        <text>N(1)-(5-phospho-beta-D-ribosyl)glycinamide + (6R)-10-formyltetrahydrofolate = N(2)-formyl-N(1)-(5-phospho-beta-D-ribosyl)glycinamide + (6S)-5,6,7,8-tetrahydrofolate + H(+)</text>
        <dbReference type="Rhea" id="RHEA:15053"/>
        <dbReference type="ChEBI" id="CHEBI:15378"/>
        <dbReference type="ChEBI" id="CHEBI:57453"/>
        <dbReference type="ChEBI" id="CHEBI:143788"/>
        <dbReference type="ChEBI" id="CHEBI:147286"/>
        <dbReference type="ChEBI" id="CHEBI:195366"/>
        <dbReference type="EC" id="2.1.2.2"/>
    </reaction>
</comment>
<comment type="pathway">
    <text evidence="1">Purine metabolism; IMP biosynthesis via de novo pathway; N(2)-formyl-N(1)-(5-phospho-D-ribosyl)glycinamide from N(1)-(5-phospho-D-ribosyl)glycinamide (10-formyl THF route): step 1/1.</text>
</comment>
<comment type="similarity">
    <text evidence="1">Belongs to the GART family.</text>
</comment>
<feature type="chain" id="PRO_0000428159" description="Phosphoribosylglycinamide formyltransferase">
    <location>
        <begin position="1"/>
        <end position="215"/>
    </location>
</feature>
<feature type="active site" description="Proton donor" evidence="1">
    <location>
        <position position="118"/>
    </location>
</feature>
<feature type="binding site" evidence="1">
    <location>
        <position position="74"/>
    </location>
    <ligand>
        <name>(6R)-10-formyltetrahydrofolate</name>
        <dbReference type="ChEBI" id="CHEBI:195366"/>
    </ligand>
</feature>
<feature type="binding site" evidence="1">
    <location>
        <begin position="99"/>
        <end position="102"/>
    </location>
    <ligand>
        <name>(6R)-10-formyltetrahydrofolate</name>
        <dbReference type="ChEBI" id="CHEBI:195366"/>
    </ligand>
</feature>
<feature type="binding site" evidence="1">
    <location>
        <position position="116"/>
    </location>
    <ligand>
        <name>(6R)-10-formyltetrahydrofolate</name>
        <dbReference type="ChEBI" id="CHEBI:195366"/>
    </ligand>
</feature>
<feature type="site" description="Raises pKa of active site His" evidence="1">
    <location>
        <position position="154"/>
    </location>
</feature>
<sequence>MQEPLRVPPSAPARLVVLASGTGSLLRSLLDAAVGDYPARVVAVGVDRECRAAEIAAEASVPVFTVRLADHPSRDAWDVAITAATAAHEPDLVVSAGFMRILGPQFLSRFYGRTLNTHPALLPAFPGTHGVADALAYGVKVTGATVHLVDAGTDTGPILAQQPVPVLDGDDEETLHERIKVTERRLLVAAVAALATHGVTVVGRTATMGRKVTIG</sequence>
<protein>
    <recommendedName>
        <fullName evidence="1">Phosphoribosylglycinamide formyltransferase</fullName>
        <ecNumber evidence="1">2.1.2.2</ecNumber>
    </recommendedName>
    <alternativeName>
        <fullName evidence="1">5'-phosphoribosylglycinamide transformylase</fullName>
    </alternativeName>
    <alternativeName>
        <fullName evidence="1">GAR transformylase</fullName>
        <shortName evidence="1">GART</shortName>
    </alternativeName>
</protein>
<name>PUR3_MYCTO</name>
<gene>
    <name evidence="1" type="primary">purN</name>
    <name type="ordered locus">MT0983</name>
</gene>
<keyword id="KW-0658">Purine biosynthesis</keyword>
<keyword id="KW-1185">Reference proteome</keyword>
<keyword id="KW-0808">Transferase</keyword>
<dbReference type="EC" id="2.1.2.2" evidence="1"/>
<dbReference type="EMBL" id="AE000516">
    <property type="protein sequence ID" value="AAK45231.1"/>
    <property type="molecule type" value="Genomic_DNA"/>
</dbReference>
<dbReference type="PIR" id="B70717">
    <property type="entry name" value="B70717"/>
</dbReference>
<dbReference type="RefSeq" id="WP_003898661.1">
    <property type="nucleotide sequence ID" value="NZ_KK341227.1"/>
</dbReference>
<dbReference type="SMR" id="P9WHM4"/>
<dbReference type="KEGG" id="mtc:MT0983"/>
<dbReference type="PATRIC" id="fig|83331.31.peg.1055"/>
<dbReference type="HOGENOM" id="CLU_038395_1_0_11"/>
<dbReference type="UniPathway" id="UPA00074">
    <property type="reaction ID" value="UER00126"/>
</dbReference>
<dbReference type="Proteomes" id="UP000001020">
    <property type="component" value="Chromosome"/>
</dbReference>
<dbReference type="GO" id="GO:0005829">
    <property type="term" value="C:cytosol"/>
    <property type="evidence" value="ECO:0007669"/>
    <property type="project" value="TreeGrafter"/>
</dbReference>
<dbReference type="GO" id="GO:0004644">
    <property type="term" value="F:phosphoribosylglycinamide formyltransferase activity"/>
    <property type="evidence" value="ECO:0007669"/>
    <property type="project" value="UniProtKB-UniRule"/>
</dbReference>
<dbReference type="GO" id="GO:0006189">
    <property type="term" value="P:'de novo' IMP biosynthetic process"/>
    <property type="evidence" value="ECO:0007669"/>
    <property type="project" value="UniProtKB-UniRule"/>
</dbReference>
<dbReference type="CDD" id="cd08645">
    <property type="entry name" value="FMT_core_GART"/>
    <property type="match status" value="1"/>
</dbReference>
<dbReference type="FunFam" id="3.40.50.170:FF:000008">
    <property type="entry name" value="Phosphoribosylglycinamide formyltransferase"/>
    <property type="match status" value="1"/>
</dbReference>
<dbReference type="Gene3D" id="3.40.50.170">
    <property type="entry name" value="Formyl transferase, N-terminal domain"/>
    <property type="match status" value="1"/>
</dbReference>
<dbReference type="HAMAP" id="MF_01930">
    <property type="entry name" value="PurN"/>
    <property type="match status" value="1"/>
</dbReference>
<dbReference type="InterPro" id="IPR002376">
    <property type="entry name" value="Formyl_transf_N"/>
</dbReference>
<dbReference type="InterPro" id="IPR036477">
    <property type="entry name" value="Formyl_transf_N_sf"/>
</dbReference>
<dbReference type="InterPro" id="IPR004607">
    <property type="entry name" value="GART"/>
</dbReference>
<dbReference type="NCBIfam" id="TIGR00639">
    <property type="entry name" value="PurN"/>
    <property type="match status" value="1"/>
</dbReference>
<dbReference type="PANTHER" id="PTHR43369">
    <property type="entry name" value="PHOSPHORIBOSYLGLYCINAMIDE FORMYLTRANSFERASE"/>
    <property type="match status" value="1"/>
</dbReference>
<dbReference type="PANTHER" id="PTHR43369:SF2">
    <property type="entry name" value="PHOSPHORIBOSYLGLYCINAMIDE FORMYLTRANSFERASE"/>
    <property type="match status" value="1"/>
</dbReference>
<dbReference type="Pfam" id="PF00551">
    <property type="entry name" value="Formyl_trans_N"/>
    <property type="match status" value="1"/>
</dbReference>
<dbReference type="SUPFAM" id="SSF53328">
    <property type="entry name" value="Formyltransferase"/>
    <property type="match status" value="1"/>
</dbReference>
<organism>
    <name type="scientific">Mycobacterium tuberculosis (strain CDC 1551 / Oshkosh)</name>
    <dbReference type="NCBI Taxonomy" id="83331"/>
    <lineage>
        <taxon>Bacteria</taxon>
        <taxon>Bacillati</taxon>
        <taxon>Actinomycetota</taxon>
        <taxon>Actinomycetes</taxon>
        <taxon>Mycobacteriales</taxon>
        <taxon>Mycobacteriaceae</taxon>
        <taxon>Mycobacterium</taxon>
        <taxon>Mycobacterium tuberculosis complex</taxon>
    </lineage>
</organism>
<evidence type="ECO:0000255" key="1">
    <source>
        <dbReference type="HAMAP-Rule" id="MF_01930"/>
    </source>
</evidence>
<reference key="1">
    <citation type="journal article" date="2002" name="J. Bacteriol.">
        <title>Whole-genome comparison of Mycobacterium tuberculosis clinical and laboratory strains.</title>
        <authorList>
            <person name="Fleischmann R.D."/>
            <person name="Alland D."/>
            <person name="Eisen J.A."/>
            <person name="Carpenter L."/>
            <person name="White O."/>
            <person name="Peterson J.D."/>
            <person name="DeBoy R.T."/>
            <person name="Dodson R.J."/>
            <person name="Gwinn M.L."/>
            <person name="Haft D.H."/>
            <person name="Hickey E.K."/>
            <person name="Kolonay J.F."/>
            <person name="Nelson W.C."/>
            <person name="Umayam L.A."/>
            <person name="Ermolaeva M.D."/>
            <person name="Salzberg S.L."/>
            <person name="Delcher A."/>
            <person name="Utterback T.R."/>
            <person name="Weidman J.F."/>
            <person name="Khouri H.M."/>
            <person name="Gill J."/>
            <person name="Mikula A."/>
            <person name="Bishai W."/>
            <person name="Jacobs W.R. Jr."/>
            <person name="Venter J.C."/>
            <person name="Fraser C.M."/>
        </authorList>
    </citation>
    <scope>NUCLEOTIDE SEQUENCE [LARGE SCALE GENOMIC DNA]</scope>
    <source>
        <strain>CDC 1551 / Oshkosh</strain>
    </source>
</reference>
<accession>P9WHM4</accession>
<accession>F2GHX1</accession>
<accession>L0T6W9</accession>
<accession>P71554</accession>
<accession>Q7D921</accession>